<evidence type="ECO:0000255" key="1">
    <source>
        <dbReference type="HAMAP-Rule" id="MF_01351"/>
    </source>
</evidence>
<organism>
    <name type="scientific">Eriophyllum congdonii</name>
    <name type="common">Congdon's woolly sunflower</name>
    <dbReference type="NCBI Taxonomy" id="149424"/>
    <lineage>
        <taxon>Eukaryota</taxon>
        <taxon>Viridiplantae</taxon>
        <taxon>Streptophyta</taxon>
        <taxon>Embryophyta</taxon>
        <taxon>Tracheophyta</taxon>
        <taxon>Spermatophyta</taxon>
        <taxon>Magnoliopsida</taxon>
        <taxon>eudicotyledons</taxon>
        <taxon>Gunneridae</taxon>
        <taxon>Pentapetalae</taxon>
        <taxon>asterids</taxon>
        <taxon>campanulids</taxon>
        <taxon>Asterales</taxon>
        <taxon>Asteraceae</taxon>
        <taxon>Asteroideae</taxon>
        <taxon>Heliantheae alliance</taxon>
        <taxon>Madieae</taxon>
        <taxon>Baeriinae</taxon>
        <taxon>Eriophyllum</taxon>
    </lineage>
</organism>
<comment type="function">
    <text evidence="1">NDH shuttles electrons from NAD(P)H:plastoquinone, via FMN and iron-sulfur (Fe-S) centers, to quinones in the photosynthetic chain and possibly in a chloroplast respiratory chain. The immediate electron acceptor for the enzyme in this species is believed to be plastoquinone. Couples the redox reaction to proton translocation, and thus conserves the redox energy in a proton gradient.</text>
</comment>
<comment type="catalytic activity">
    <reaction evidence="1">
        <text>a plastoquinone + NADH + (n+1) H(+)(in) = a plastoquinol + NAD(+) + n H(+)(out)</text>
        <dbReference type="Rhea" id="RHEA:42608"/>
        <dbReference type="Rhea" id="RHEA-COMP:9561"/>
        <dbReference type="Rhea" id="RHEA-COMP:9562"/>
        <dbReference type="ChEBI" id="CHEBI:15378"/>
        <dbReference type="ChEBI" id="CHEBI:17757"/>
        <dbReference type="ChEBI" id="CHEBI:57540"/>
        <dbReference type="ChEBI" id="CHEBI:57945"/>
        <dbReference type="ChEBI" id="CHEBI:62192"/>
    </reaction>
</comment>
<comment type="catalytic activity">
    <reaction evidence="1">
        <text>a plastoquinone + NADPH + (n+1) H(+)(in) = a plastoquinol + NADP(+) + n H(+)(out)</text>
        <dbReference type="Rhea" id="RHEA:42612"/>
        <dbReference type="Rhea" id="RHEA-COMP:9561"/>
        <dbReference type="Rhea" id="RHEA-COMP:9562"/>
        <dbReference type="ChEBI" id="CHEBI:15378"/>
        <dbReference type="ChEBI" id="CHEBI:17757"/>
        <dbReference type="ChEBI" id="CHEBI:57783"/>
        <dbReference type="ChEBI" id="CHEBI:58349"/>
        <dbReference type="ChEBI" id="CHEBI:62192"/>
    </reaction>
</comment>
<comment type="cofactor">
    <cofactor evidence="1">
        <name>[4Fe-4S] cluster</name>
        <dbReference type="ChEBI" id="CHEBI:49883"/>
    </cofactor>
    <text evidence="1">Binds 2 [4Fe-4S] clusters per subunit.</text>
</comment>
<comment type="subunit">
    <text evidence="1">NDH is composed of at least 16 different subunits, 5 of which are encoded in the nucleus.</text>
</comment>
<comment type="subcellular location">
    <subcellularLocation>
        <location evidence="1">Plastid</location>
        <location evidence="1">Chloroplast thylakoid membrane</location>
        <topology evidence="1">Peripheral membrane protein</topology>
    </subcellularLocation>
</comment>
<comment type="similarity">
    <text evidence="1">Belongs to the complex I 23 kDa subunit family.</text>
</comment>
<proteinExistence type="inferred from homology"/>
<reference key="1">
    <citation type="submission" date="2003-01" db="EMBL/GenBank/DDBJ databases">
        <title>Chloroplast DNA phylogeny of tribe Heliantheae (Asteraceae).</title>
        <authorList>
            <person name="Panero J.L."/>
            <person name="Baldwin B.G."/>
            <person name="Schilling E.E."/>
            <person name="Clevinger J.A."/>
        </authorList>
    </citation>
    <scope>NUCLEOTIDE SEQUENCE [GENOMIC DNA]</scope>
</reference>
<protein>
    <recommendedName>
        <fullName evidence="1">NAD(P)H-quinone oxidoreductase subunit I, chloroplastic</fullName>
        <ecNumber evidence="1">7.1.1.-</ecNumber>
    </recommendedName>
    <alternativeName>
        <fullName evidence="1">NAD(P)H dehydrogenase subunit I</fullName>
        <shortName evidence="1">NDH subunit I</shortName>
    </alternativeName>
    <alternativeName>
        <fullName evidence="1">NADH-plastoquinone oxidoreductase subunit I</fullName>
    </alternativeName>
</protein>
<keyword id="KW-0004">4Fe-4S</keyword>
<keyword id="KW-0150">Chloroplast</keyword>
<keyword id="KW-0408">Iron</keyword>
<keyword id="KW-0411">Iron-sulfur</keyword>
<keyword id="KW-0472">Membrane</keyword>
<keyword id="KW-0479">Metal-binding</keyword>
<keyword id="KW-0520">NAD</keyword>
<keyword id="KW-0521">NADP</keyword>
<keyword id="KW-0934">Plastid</keyword>
<keyword id="KW-0618">Plastoquinone</keyword>
<keyword id="KW-0874">Quinone</keyword>
<keyword id="KW-0677">Repeat</keyword>
<keyword id="KW-0793">Thylakoid</keyword>
<keyword id="KW-1278">Translocase</keyword>
<gene>
    <name evidence="1" type="primary">ndhI</name>
</gene>
<geneLocation type="chloroplast"/>
<sequence length="166" mass="19509">MFPMVTEFMNYGQQTVRAARYIGQGFMITLSHANRLPVTIQYPYEKLITSERFRGRIHFEFDKCIACEVCVRVCPIDLPVVDWKLETDIRKKRLLNYSIDFGICIFCGNCVEYCPTNCLSMTEEYELSTYDRHELNYNQIALGRLPMSIIDDYTIRTIFNLPEIKT</sequence>
<name>NDHI_ERICN</name>
<feature type="chain" id="PRO_0000250786" description="NAD(P)H-quinone oxidoreductase subunit I, chloroplastic">
    <location>
        <begin position="1"/>
        <end position="166"/>
    </location>
</feature>
<feature type="domain" description="4Fe-4S ferredoxin-type 1" evidence="1">
    <location>
        <begin position="55"/>
        <end position="84"/>
    </location>
</feature>
<feature type="domain" description="4Fe-4S ferredoxin-type 2" evidence="1">
    <location>
        <begin position="95"/>
        <end position="124"/>
    </location>
</feature>
<feature type="binding site" evidence="1">
    <location>
        <position position="64"/>
    </location>
    <ligand>
        <name>[4Fe-4S] cluster</name>
        <dbReference type="ChEBI" id="CHEBI:49883"/>
        <label>1</label>
    </ligand>
</feature>
<feature type="binding site" evidence="1">
    <location>
        <position position="67"/>
    </location>
    <ligand>
        <name>[4Fe-4S] cluster</name>
        <dbReference type="ChEBI" id="CHEBI:49883"/>
        <label>1</label>
    </ligand>
</feature>
<feature type="binding site" evidence="1">
    <location>
        <position position="70"/>
    </location>
    <ligand>
        <name>[4Fe-4S] cluster</name>
        <dbReference type="ChEBI" id="CHEBI:49883"/>
        <label>1</label>
    </ligand>
</feature>
<feature type="binding site" evidence="1">
    <location>
        <position position="74"/>
    </location>
    <ligand>
        <name>[4Fe-4S] cluster</name>
        <dbReference type="ChEBI" id="CHEBI:49883"/>
        <label>2</label>
    </ligand>
</feature>
<feature type="binding site" evidence="1">
    <location>
        <position position="104"/>
    </location>
    <ligand>
        <name>[4Fe-4S] cluster</name>
        <dbReference type="ChEBI" id="CHEBI:49883"/>
        <label>2</label>
    </ligand>
</feature>
<feature type="binding site" evidence="1">
    <location>
        <position position="107"/>
    </location>
    <ligand>
        <name>[4Fe-4S] cluster</name>
        <dbReference type="ChEBI" id="CHEBI:49883"/>
        <label>2</label>
    </ligand>
</feature>
<feature type="binding site" evidence="1">
    <location>
        <position position="110"/>
    </location>
    <ligand>
        <name>[4Fe-4S] cluster</name>
        <dbReference type="ChEBI" id="CHEBI:49883"/>
        <label>2</label>
    </ligand>
</feature>
<feature type="binding site" evidence="1">
    <location>
        <position position="114"/>
    </location>
    <ligand>
        <name>[4Fe-4S] cluster</name>
        <dbReference type="ChEBI" id="CHEBI:49883"/>
        <label>1</label>
    </ligand>
</feature>
<dbReference type="EC" id="7.1.1.-" evidence="1"/>
<dbReference type="EMBL" id="AF383786">
    <property type="protein sequence ID" value="AAN61727.1"/>
    <property type="molecule type" value="Genomic_DNA"/>
</dbReference>
<dbReference type="SMR" id="Q8HVS7"/>
<dbReference type="GO" id="GO:0009535">
    <property type="term" value="C:chloroplast thylakoid membrane"/>
    <property type="evidence" value="ECO:0007669"/>
    <property type="project" value="UniProtKB-SubCell"/>
</dbReference>
<dbReference type="GO" id="GO:0051539">
    <property type="term" value="F:4 iron, 4 sulfur cluster binding"/>
    <property type="evidence" value="ECO:0007669"/>
    <property type="project" value="UniProtKB-KW"/>
</dbReference>
<dbReference type="GO" id="GO:0005506">
    <property type="term" value="F:iron ion binding"/>
    <property type="evidence" value="ECO:0007669"/>
    <property type="project" value="UniProtKB-UniRule"/>
</dbReference>
<dbReference type="GO" id="GO:0008137">
    <property type="term" value="F:NADH dehydrogenase (ubiquinone) activity"/>
    <property type="evidence" value="ECO:0007669"/>
    <property type="project" value="InterPro"/>
</dbReference>
<dbReference type="GO" id="GO:0048038">
    <property type="term" value="F:quinone binding"/>
    <property type="evidence" value="ECO:0007669"/>
    <property type="project" value="UniProtKB-KW"/>
</dbReference>
<dbReference type="GO" id="GO:0019684">
    <property type="term" value="P:photosynthesis, light reaction"/>
    <property type="evidence" value="ECO:0007669"/>
    <property type="project" value="UniProtKB-UniRule"/>
</dbReference>
<dbReference type="FunFam" id="3.30.70.3270:FF:000006">
    <property type="entry name" value="NAD(P)H-quinone oxidoreductase subunit I, chloroplastic"/>
    <property type="match status" value="1"/>
</dbReference>
<dbReference type="Gene3D" id="3.30.70.3270">
    <property type="match status" value="1"/>
</dbReference>
<dbReference type="HAMAP" id="MF_01351">
    <property type="entry name" value="NDH1_NuoI"/>
    <property type="match status" value="1"/>
</dbReference>
<dbReference type="InterPro" id="IPR017896">
    <property type="entry name" value="4Fe4S_Fe-S-bd"/>
</dbReference>
<dbReference type="InterPro" id="IPR017900">
    <property type="entry name" value="4Fe4S_Fe_S_CS"/>
</dbReference>
<dbReference type="InterPro" id="IPR010226">
    <property type="entry name" value="NADH_quinone_OxRdtase_chainI"/>
</dbReference>
<dbReference type="InterPro" id="IPR004497">
    <property type="entry name" value="NDHI"/>
</dbReference>
<dbReference type="NCBIfam" id="TIGR00403">
    <property type="entry name" value="ndhI"/>
    <property type="match status" value="1"/>
</dbReference>
<dbReference type="NCBIfam" id="TIGR01971">
    <property type="entry name" value="NuoI"/>
    <property type="match status" value="1"/>
</dbReference>
<dbReference type="NCBIfam" id="NF004537">
    <property type="entry name" value="PRK05888.1-3"/>
    <property type="match status" value="1"/>
</dbReference>
<dbReference type="PANTHER" id="PTHR47275">
    <property type="entry name" value="NAD(P)H-QUINONE OXIDOREDUCTASE SUBUNIT I, CHLOROPLASTIC"/>
    <property type="match status" value="1"/>
</dbReference>
<dbReference type="PANTHER" id="PTHR47275:SF1">
    <property type="entry name" value="NAD(P)H-QUINONE OXIDOREDUCTASE SUBUNIT I, CHLOROPLASTIC"/>
    <property type="match status" value="1"/>
</dbReference>
<dbReference type="Pfam" id="PF00037">
    <property type="entry name" value="Fer4"/>
    <property type="match status" value="2"/>
</dbReference>
<dbReference type="SUPFAM" id="SSF54862">
    <property type="entry name" value="4Fe-4S ferredoxins"/>
    <property type="match status" value="1"/>
</dbReference>
<dbReference type="PROSITE" id="PS00198">
    <property type="entry name" value="4FE4S_FER_1"/>
    <property type="match status" value="2"/>
</dbReference>
<dbReference type="PROSITE" id="PS51379">
    <property type="entry name" value="4FE4S_FER_2"/>
    <property type="match status" value="2"/>
</dbReference>
<accession>Q8HVS7</accession>